<keyword id="KW-0903">Direct protein sequencing</keyword>
<keyword id="KW-1015">Disulfide bond</keyword>
<keyword id="KW-0708">Seed storage protein</keyword>
<keyword id="KW-0732">Signal</keyword>
<keyword id="KW-0758">Storage protein</keyword>
<organism>
    <name type="scientific">Arachis hypogaea</name>
    <name type="common">Peanut</name>
    <dbReference type="NCBI Taxonomy" id="3818"/>
    <lineage>
        <taxon>Eukaryota</taxon>
        <taxon>Viridiplantae</taxon>
        <taxon>Streptophyta</taxon>
        <taxon>Embryophyta</taxon>
        <taxon>Tracheophyta</taxon>
        <taxon>Spermatophyta</taxon>
        <taxon>Magnoliopsida</taxon>
        <taxon>eudicotyledons</taxon>
        <taxon>Gunneridae</taxon>
        <taxon>Pentapetalae</taxon>
        <taxon>rosids</taxon>
        <taxon>fabids</taxon>
        <taxon>Fabales</taxon>
        <taxon>Fabaceae</taxon>
        <taxon>Papilionoideae</taxon>
        <taxon>50 kb inversion clade</taxon>
        <taxon>dalbergioids sensu lato</taxon>
        <taxon>Dalbergieae</taxon>
        <taxon>Pterocarpus clade</taxon>
        <taxon>Arachis</taxon>
    </lineage>
</organism>
<comment type="subunit">
    <text evidence="7">Hexamer; each subunit is composed of an acidic and a basic chain derived from a single precursor and linked by a disulfide bond.</text>
</comment>
<comment type="induction">
    <text evidence="6">Repressed by water stress.</text>
</comment>
<comment type="similarity">
    <text evidence="3">Belongs to the 11S seed storage protein (globulins) family.</text>
</comment>
<sequence length="484" mass="54569">MAKLLALSVCFCFLVLGASSVTFRQQGEENECQFQRLNAQRPDNCIESEGGYIETWNPNNQEFQCAGVALSRFVLRRNALRRPFYSNAPQEIFIYQGSGYFGLIFPGCPGTFEEPIQGSEQFQRPSRHFQGQDQSQRPLDTHQKVHGFREGDLIAVPHGVAFWIYNDQDTDVVAISVLHTNSLHNQLDQFPRRFNLAGKQEQEFLRYQQRSGRQSPKGEEQEQEQENEGGNVFSGFSTEFLSHGFQVNEDIVRNLRGENEREEQGAIVTVKGGLSILVPPEWRQSYQQPGRGDKDFNNGIEETICTATVKMNIGKSTSADIYNPQAGSVRTVNELDLPILNRLGLSAEYGSIHRDAMFVPHYNMNANSMIYALHGGAHVQVVDCNGNRVFDEELQEGQSLVVPQNFAVAAKSQSEHFLYVAFKTNSRASISNLAGKNSYMWNLPEDVVANSYGLQYEQARQLKNNNPFTFLVPPQDSQMIRTVA</sequence>
<accession>Q647H2</accession>
<proteinExistence type="evidence at protein level"/>
<evidence type="ECO:0000250" key="1"/>
<evidence type="ECO:0000250" key="2">
    <source>
        <dbReference type="UniProtKB" id="P04405"/>
    </source>
</evidence>
<evidence type="ECO:0000255" key="3"/>
<evidence type="ECO:0000256" key="4">
    <source>
        <dbReference type="SAM" id="MobiDB-lite"/>
    </source>
</evidence>
<evidence type="ECO:0000269" key="5">
    <source ref="1"/>
</evidence>
<evidence type="ECO:0000269" key="6">
    <source ref="2"/>
</evidence>
<evidence type="ECO:0000305" key="7"/>
<evidence type="ECO:0000312" key="8">
    <source>
        <dbReference type="EMBL" id="AAU21492.1"/>
    </source>
</evidence>
<reference evidence="8" key="1">
    <citation type="journal article" date="2005" name="Plant Sci.">
        <title>Isolation of peanut genes encoding arachins and conglutins by expressed sequence tags.</title>
        <authorList>
            <person name="Yan Y.-S."/>
            <person name="Lin X.-D."/>
            <person name="Zhang Y.-S."/>
            <person name="Wang L."/>
            <person name="Wu K."/>
            <person name="Huang S.-Z."/>
        </authorList>
        <dbReference type="AGRICOLA" id="IND43739496"/>
    </citation>
    <scope>NUCLEOTIDE SEQUENCE [MRNA]</scope>
    <source>
        <strain evidence="5">cv. Shanyou 523</strain>
        <tissue evidence="5">Cotyledon</tissue>
    </source>
</reference>
<reference evidence="7" key="2">
    <citation type="submission" date="2007-03" db="UniProtKB">
        <title>Suppression of seed storage proteins upon water stress in Arachis hypogea var. M-13 seeds.</title>
        <authorList>
            <person name="Katam R."/>
            <person name="Vasanthaiah H.K.N."/>
            <person name="Basha S.M."/>
            <person name="McClung S."/>
        </authorList>
    </citation>
    <scope>PROTEIN SEQUENCE OF 316-354; 412-423 AND 428-436</scope>
    <scope>REPRESSION BY WATER STRESS</scope>
    <source>
        <strain evidence="6">cv. M13</strain>
        <tissue evidence="6">Seed</tissue>
    </source>
</reference>
<name>AHY3_ARAHY</name>
<feature type="signal peptide" evidence="3">
    <location>
        <begin position="1"/>
        <end position="20"/>
    </location>
</feature>
<feature type="chain" id="PRO_0000287419" description="Arachin Ahy-3 chain alpha" evidence="2 3">
    <location>
        <begin position="21"/>
        <end position="294"/>
    </location>
</feature>
<feature type="propeptide" id="PRO_0000287420" evidence="2">
    <location>
        <begin position="295"/>
        <end position="298"/>
    </location>
</feature>
<feature type="chain" id="PRO_0000287421" description="Arachin Ahy-3 chain beta" evidence="2">
    <location>
        <begin position="299"/>
        <end position="478"/>
    </location>
</feature>
<feature type="propeptide" id="PRO_0000287422" evidence="2">
    <location>
        <begin position="479"/>
        <end position="484"/>
    </location>
</feature>
<feature type="domain" description="Cupin type-1 1" evidence="3">
    <location>
        <begin position="35"/>
        <end position="253"/>
    </location>
</feature>
<feature type="domain" description="Cupin type-1 2" evidence="3">
    <location>
        <begin position="311"/>
        <end position="460"/>
    </location>
</feature>
<feature type="region of interest" description="Disordered" evidence="4">
    <location>
        <begin position="208"/>
        <end position="233"/>
    </location>
</feature>
<feature type="disulfide bond" evidence="1">
    <location>
        <begin position="32"/>
        <end position="65"/>
    </location>
</feature>
<feature type="disulfide bond" description="Interchain (between alpha and beta chains)" evidence="2">
    <location>
        <begin position="108"/>
        <end position="305"/>
    </location>
</feature>
<protein>
    <recommendedName>
        <fullName>Arachin Ahy-3</fullName>
    </recommendedName>
    <component>
        <recommendedName>
            <fullName>Arachin Ahy-3 chain alpha</fullName>
        </recommendedName>
    </component>
    <component>
        <recommendedName>
            <fullName>Arachin Ahy-3 chain beta</fullName>
        </recommendedName>
    </component>
</protein>
<dbReference type="EMBL" id="AY722687">
    <property type="protein sequence ID" value="AAU21492.1"/>
    <property type="molecule type" value="mRNA"/>
</dbReference>
<dbReference type="RefSeq" id="NP_001363142.1">
    <property type="nucleotide sequence ID" value="NM_001376213.1"/>
</dbReference>
<dbReference type="SMR" id="Q647H2"/>
<dbReference type="Allergome" id="52">
    <property type="allergen name" value="Ara h 3"/>
</dbReference>
<dbReference type="GeneID" id="112758694"/>
<dbReference type="OrthoDB" id="1389300at2759"/>
<dbReference type="GO" id="GO:0045735">
    <property type="term" value="F:nutrient reservoir activity"/>
    <property type="evidence" value="ECO:0007669"/>
    <property type="project" value="UniProtKB-KW"/>
</dbReference>
<dbReference type="CDD" id="cd02243">
    <property type="entry name" value="cupin_11S_legumin_C"/>
    <property type="match status" value="1"/>
</dbReference>
<dbReference type="CDD" id="cd02242">
    <property type="entry name" value="cupin_11S_legumin_N"/>
    <property type="match status" value="1"/>
</dbReference>
<dbReference type="FunFam" id="2.60.120.10:FF:000073">
    <property type="entry name" value="Glycinin G1"/>
    <property type="match status" value="1"/>
</dbReference>
<dbReference type="FunFam" id="2.60.120.10:FF:000124">
    <property type="entry name" value="Glycinin G5"/>
    <property type="match status" value="1"/>
</dbReference>
<dbReference type="Gene3D" id="2.60.120.10">
    <property type="entry name" value="Jelly Rolls"/>
    <property type="match status" value="2"/>
</dbReference>
<dbReference type="InterPro" id="IPR022379">
    <property type="entry name" value="11S_seedstore_CS"/>
</dbReference>
<dbReference type="InterPro" id="IPR006044">
    <property type="entry name" value="11S_seedstore_pln"/>
</dbReference>
<dbReference type="InterPro" id="IPR006045">
    <property type="entry name" value="Cupin_1"/>
</dbReference>
<dbReference type="InterPro" id="IPR014710">
    <property type="entry name" value="RmlC-like_jellyroll"/>
</dbReference>
<dbReference type="InterPro" id="IPR011051">
    <property type="entry name" value="RmlC_Cupin_sf"/>
</dbReference>
<dbReference type="InterPro" id="IPR050253">
    <property type="entry name" value="Seed_Storage-Functional"/>
</dbReference>
<dbReference type="PANTHER" id="PTHR31189:SF77">
    <property type="entry name" value="GLYCININ G3"/>
    <property type="match status" value="1"/>
</dbReference>
<dbReference type="PANTHER" id="PTHR31189">
    <property type="entry name" value="OS03G0336100 PROTEIN-RELATED"/>
    <property type="match status" value="1"/>
</dbReference>
<dbReference type="Pfam" id="PF00190">
    <property type="entry name" value="Cupin_1"/>
    <property type="match status" value="2"/>
</dbReference>
<dbReference type="PRINTS" id="PR00439">
    <property type="entry name" value="11SGLOBULIN"/>
</dbReference>
<dbReference type="SMART" id="SM00835">
    <property type="entry name" value="Cupin_1"/>
    <property type="match status" value="2"/>
</dbReference>
<dbReference type="SUPFAM" id="SSF51182">
    <property type="entry name" value="RmlC-like cupins"/>
    <property type="match status" value="1"/>
</dbReference>
<dbReference type="PROSITE" id="PS00305">
    <property type="entry name" value="11S_SEED_STORAGE"/>
    <property type="match status" value="1"/>
</dbReference>